<name>LACG_STAAS</name>
<keyword id="KW-0326">Glycosidase</keyword>
<keyword id="KW-0378">Hydrolase</keyword>
<comment type="catalytic activity">
    <reaction evidence="1">
        <text>a 6-phospho-beta-D-galactoside + H2O = D-galactose 6-phosphate + an alcohol</text>
        <dbReference type="Rhea" id="RHEA:24568"/>
        <dbReference type="ChEBI" id="CHEBI:15377"/>
        <dbReference type="ChEBI" id="CHEBI:30879"/>
        <dbReference type="ChEBI" id="CHEBI:58534"/>
        <dbReference type="ChEBI" id="CHEBI:91004"/>
        <dbReference type="EC" id="3.2.1.85"/>
    </reaction>
</comment>
<comment type="pathway">
    <text evidence="1">Carbohydrate metabolism; lactose degradation; D-galactose 6-phosphate and beta-D-glucose from lactose 6-phosphate: step 1/1.</text>
</comment>
<comment type="similarity">
    <text evidence="1">Belongs to the glycosyl hydrolase 1 family.</text>
</comment>
<feature type="chain" id="PRO_0000063888" description="6-phospho-beta-galactosidase">
    <location>
        <begin position="1"/>
        <end position="470"/>
    </location>
</feature>
<feature type="active site" description="Proton donor" evidence="1">
    <location>
        <position position="160"/>
    </location>
</feature>
<feature type="active site" description="Nucleophile" evidence="1">
    <location>
        <position position="375"/>
    </location>
</feature>
<feature type="binding site" evidence="1">
    <location>
        <position position="19"/>
    </location>
    <ligand>
        <name>D-galactose 6-phosphate</name>
        <dbReference type="ChEBI" id="CHEBI:91004"/>
    </ligand>
</feature>
<feature type="binding site" evidence="1">
    <location>
        <position position="116"/>
    </location>
    <ligand>
        <name>D-galactose 6-phosphate</name>
        <dbReference type="ChEBI" id="CHEBI:91004"/>
    </ligand>
</feature>
<feature type="binding site" evidence="1">
    <location>
        <position position="159"/>
    </location>
    <ligand>
        <name>D-galactose 6-phosphate</name>
        <dbReference type="ChEBI" id="CHEBI:91004"/>
    </ligand>
</feature>
<feature type="binding site" evidence="1">
    <location>
        <position position="160"/>
    </location>
    <ligand>
        <name>D-galactose 6-phosphate</name>
        <dbReference type="ChEBI" id="CHEBI:91004"/>
    </ligand>
</feature>
<feature type="binding site" evidence="1">
    <location>
        <position position="297"/>
    </location>
    <ligand>
        <name>D-galactose 6-phosphate</name>
        <dbReference type="ChEBI" id="CHEBI:91004"/>
    </ligand>
</feature>
<feature type="binding site" evidence="1">
    <location>
        <position position="430"/>
    </location>
    <ligand>
        <name>D-galactose 6-phosphate</name>
        <dbReference type="ChEBI" id="CHEBI:91004"/>
    </ligand>
</feature>
<feature type="binding site" evidence="1">
    <location>
        <position position="431"/>
    </location>
    <ligand>
        <name>D-galactose 6-phosphate</name>
        <dbReference type="ChEBI" id="CHEBI:91004"/>
    </ligand>
</feature>
<feature type="binding site" evidence="1">
    <location>
        <position position="437"/>
    </location>
    <ligand>
        <name>D-galactose 6-phosphate</name>
        <dbReference type="ChEBI" id="CHEBI:91004"/>
    </ligand>
</feature>
<feature type="binding site" evidence="1">
    <location>
        <position position="439"/>
    </location>
    <ligand>
        <name>D-galactose 6-phosphate</name>
        <dbReference type="ChEBI" id="CHEBI:91004"/>
    </ligand>
</feature>
<proteinExistence type="inferred from homology"/>
<organism>
    <name type="scientific">Staphylococcus aureus (strain MSSA476)</name>
    <dbReference type="NCBI Taxonomy" id="282459"/>
    <lineage>
        <taxon>Bacteria</taxon>
        <taxon>Bacillati</taxon>
        <taxon>Bacillota</taxon>
        <taxon>Bacilli</taxon>
        <taxon>Bacillales</taxon>
        <taxon>Staphylococcaceae</taxon>
        <taxon>Staphylococcus</taxon>
    </lineage>
</organism>
<sequence length="470" mass="54565">MTKTLPEDFIFGGATAAYQAEGATNTDGKGRVAWDTYLEENYWYTAEPASDFYNRYPVDLELSEKFGVNGIRISIAWSRIFPNGYGEVNPKGVEYYHKLFAECHKRHVEPFVTLHHFDTPEVLHKDGDFLNRKTIDYFVDYAEYCFKEFPEVKYWTTFNEIGPIGDGQYLVGKFPPGIKYDFEKVFQSHHNMMVAHARAVKLFKDGGYQGEIGVVHALPTKYPFDPSNPEDVRAAELEDIIHNKFILDATYLGKYSRETMEGVQHILSVNGGKLNITDEDYAILDAAKDLNDFLGINYYMSDWMRGYDGESEITHNATGDKGGSKYQLKGVGQREFDVDVPRTDWDWMIYPQGLYDQIMRVVKDYPNYHKIYITENGLGYKDEFIESEKTVHDDARIDYVRQHLNVIADAIKDGANVKGYFIWSLMDVFSWSNGYEKRYGLFYVDFETQERYPKKSAYWYKELAETKEIK</sequence>
<gene>
    <name evidence="1" type="primary">lacG</name>
    <name type="ordered locus">SAS2090</name>
</gene>
<reference key="1">
    <citation type="journal article" date="2004" name="Proc. Natl. Acad. Sci. U.S.A.">
        <title>Complete genomes of two clinical Staphylococcus aureus strains: evidence for the rapid evolution of virulence and drug resistance.</title>
        <authorList>
            <person name="Holden M.T.G."/>
            <person name="Feil E.J."/>
            <person name="Lindsay J.A."/>
            <person name="Peacock S.J."/>
            <person name="Day N.P.J."/>
            <person name="Enright M.C."/>
            <person name="Foster T.J."/>
            <person name="Moore C.E."/>
            <person name="Hurst L."/>
            <person name="Atkin R."/>
            <person name="Barron A."/>
            <person name="Bason N."/>
            <person name="Bentley S.D."/>
            <person name="Chillingworth C."/>
            <person name="Chillingworth T."/>
            <person name="Churcher C."/>
            <person name="Clark L."/>
            <person name="Corton C."/>
            <person name="Cronin A."/>
            <person name="Doggett J."/>
            <person name="Dowd L."/>
            <person name="Feltwell T."/>
            <person name="Hance Z."/>
            <person name="Harris B."/>
            <person name="Hauser H."/>
            <person name="Holroyd S."/>
            <person name="Jagels K."/>
            <person name="James K.D."/>
            <person name="Lennard N."/>
            <person name="Line A."/>
            <person name="Mayes R."/>
            <person name="Moule S."/>
            <person name="Mungall K."/>
            <person name="Ormond D."/>
            <person name="Quail M.A."/>
            <person name="Rabbinowitsch E."/>
            <person name="Rutherford K.M."/>
            <person name="Sanders M."/>
            <person name="Sharp S."/>
            <person name="Simmonds M."/>
            <person name="Stevens K."/>
            <person name="Whitehead S."/>
            <person name="Barrell B.G."/>
            <person name="Spratt B.G."/>
            <person name="Parkhill J."/>
        </authorList>
    </citation>
    <scope>NUCLEOTIDE SEQUENCE [LARGE SCALE GENOMIC DNA]</scope>
    <source>
        <strain>MSSA476</strain>
    </source>
</reference>
<protein>
    <recommendedName>
        <fullName evidence="1">6-phospho-beta-galactosidase</fullName>
        <ecNumber evidence="1">3.2.1.85</ecNumber>
    </recommendedName>
    <alternativeName>
        <fullName evidence="1">Beta-D-phosphogalactoside galactohydrolase</fullName>
        <shortName evidence="1">PGALase</shortName>
    </alternativeName>
    <alternativeName>
        <fullName evidence="1">P-beta-Gal</fullName>
        <shortName evidence="1">PBG</shortName>
    </alternativeName>
</protein>
<evidence type="ECO:0000255" key="1">
    <source>
        <dbReference type="HAMAP-Rule" id="MF_01574"/>
    </source>
</evidence>
<accession>Q6G7C5</accession>
<dbReference type="EC" id="3.2.1.85" evidence="1"/>
<dbReference type="EMBL" id="BX571857">
    <property type="protein sequence ID" value="CAG43898.1"/>
    <property type="molecule type" value="Genomic_DNA"/>
</dbReference>
<dbReference type="RefSeq" id="WP_000169224.1">
    <property type="nucleotide sequence ID" value="NC_002953.3"/>
</dbReference>
<dbReference type="SMR" id="Q6G7C5"/>
<dbReference type="CAZy" id="GH1">
    <property type="family name" value="Glycoside Hydrolase Family 1"/>
</dbReference>
<dbReference type="KEGG" id="sas:SAS2090"/>
<dbReference type="HOGENOM" id="CLU_001859_1_3_9"/>
<dbReference type="UniPathway" id="UPA00542">
    <property type="reaction ID" value="UER00605"/>
</dbReference>
<dbReference type="GO" id="GO:0005829">
    <property type="term" value="C:cytosol"/>
    <property type="evidence" value="ECO:0007669"/>
    <property type="project" value="TreeGrafter"/>
</dbReference>
<dbReference type="GO" id="GO:0033920">
    <property type="term" value="F:6-phospho-beta-galactosidase activity"/>
    <property type="evidence" value="ECO:0007669"/>
    <property type="project" value="UniProtKB-UniRule"/>
</dbReference>
<dbReference type="GO" id="GO:0008422">
    <property type="term" value="F:beta-glucosidase activity"/>
    <property type="evidence" value="ECO:0007669"/>
    <property type="project" value="TreeGrafter"/>
</dbReference>
<dbReference type="GO" id="GO:0019512">
    <property type="term" value="P:lactose catabolic process via tagatose-6-phosphate"/>
    <property type="evidence" value="ECO:0007669"/>
    <property type="project" value="InterPro"/>
</dbReference>
<dbReference type="FunFam" id="3.20.20.80:FF:000004">
    <property type="entry name" value="Beta-glucosidase 6-phospho-beta-glucosidase"/>
    <property type="match status" value="1"/>
</dbReference>
<dbReference type="Gene3D" id="3.20.20.80">
    <property type="entry name" value="Glycosidases"/>
    <property type="match status" value="1"/>
</dbReference>
<dbReference type="HAMAP" id="MF_01574">
    <property type="entry name" value="LacG"/>
    <property type="match status" value="1"/>
</dbReference>
<dbReference type="InterPro" id="IPR005928">
    <property type="entry name" value="6P-beta-galactosidase"/>
</dbReference>
<dbReference type="InterPro" id="IPR001360">
    <property type="entry name" value="Glyco_hydro_1"/>
</dbReference>
<dbReference type="InterPro" id="IPR018120">
    <property type="entry name" value="Glyco_hydro_1_AS"/>
</dbReference>
<dbReference type="InterPro" id="IPR033132">
    <property type="entry name" value="Glyco_hydro_1_N_CS"/>
</dbReference>
<dbReference type="InterPro" id="IPR017853">
    <property type="entry name" value="Glycoside_hydrolase_SF"/>
</dbReference>
<dbReference type="NCBIfam" id="TIGR01233">
    <property type="entry name" value="lacG"/>
    <property type="match status" value="1"/>
</dbReference>
<dbReference type="NCBIfam" id="NF010036">
    <property type="entry name" value="PRK13511.1"/>
    <property type="match status" value="1"/>
</dbReference>
<dbReference type="PANTHER" id="PTHR10353">
    <property type="entry name" value="GLYCOSYL HYDROLASE"/>
    <property type="match status" value="1"/>
</dbReference>
<dbReference type="PANTHER" id="PTHR10353:SF36">
    <property type="entry name" value="LP05116P"/>
    <property type="match status" value="1"/>
</dbReference>
<dbReference type="Pfam" id="PF00232">
    <property type="entry name" value="Glyco_hydro_1"/>
    <property type="match status" value="1"/>
</dbReference>
<dbReference type="PRINTS" id="PR00131">
    <property type="entry name" value="GLHYDRLASE1"/>
</dbReference>
<dbReference type="SUPFAM" id="SSF51445">
    <property type="entry name" value="(Trans)glycosidases"/>
    <property type="match status" value="1"/>
</dbReference>
<dbReference type="PROSITE" id="PS00572">
    <property type="entry name" value="GLYCOSYL_HYDROL_F1_1"/>
    <property type="match status" value="1"/>
</dbReference>
<dbReference type="PROSITE" id="PS00653">
    <property type="entry name" value="GLYCOSYL_HYDROL_F1_2"/>
    <property type="match status" value="1"/>
</dbReference>